<feature type="chain" id="PRO_0000273126" description="Probable aspartate/prephenate aminotransferase">
    <location>
        <begin position="1"/>
        <end position="399"/>
    </location>
</feature>
<feature type="binding site" evidence="1">
    <location>
        <position position="39"/>
    </location>
    <ligand>
        <name>L-aspartate</name>
        <dbReference type="ChEBI" id="CHEBI:29991"/>
    </ligand>
</feature>
<feature type="binding site" evidence="3">
    <location>
        <position position="125"/>
    </location>
    <ligand>
        <name>L-aspartate</name>
        <dbReference type="ChEBI" id="CHEBI:29991"/>
    </ligand>
</feature>
<feature type="binding site" evidence="3">
    <location>
        <position position="175"/>
    </location>
    <ligand>
        <name>L-aspartate</name>
        <dbReference type="ChEBI" id="CHEBI:29991"/>
    </ligand>
</feature>
<feature type="binding site" evidence="3">
    <location>
        <position position="375"/>
    </location>
    <ligand>
        <name>L-aspartate</name>
        <dbReference type="ChEBI" id="CHEBI:29991"/>
    </ligand>
</feature>
<feature type="site" description="Important for prephenate aminotransferase activity" evidence="3">
    <location>
        <position position="12"/>
    </location>
</feature>
<feature type="modified residue" description="N6-(pyridoxal phosphate)lysine" evidence="3">
    <location>
        <position position="239"/>
    </location>
</feature>
<evidence type="ECO:0000250" key="1">
    <source>
        <dbReference type="UniProtKB" id="P00509"/>
    </source>
</evidence>
<evidence type="ECO:0000250" key="2">
    <source>
        <dbReference type="UniProtKB" id="Q02635"/>
    </source>
</evidence>
<evidence type="ECO:0000250" key="3">
    <source>
        <dbReference type="UniProtKB" id="Q56232"/>
    </source>
</evidence>
<evidence type="ECO:0000305" key="4"/>
<organism>
    <name type="scientific">Rickettsia typhi (strain ATCC VR-144 / Wilmington)</name>
    <dbReference type="NCBI Taxonomy" id="257363"/>
    <lineage>
        <taxon>Bacteria</taxon>
        <taxon>Pseudomonadati</taxon>
        <taxon>Pseudomonadota</taxon>
        <taxon>Alphaproteobacteria</taxon>
        <taxon>Rickettsiales</taxon>
        <taxon>Rickettsiaceae</taxon>
        <taxon>Rickettsieae</taxon>
        <taxon>Rickettsia</taxon>
        <taxon>typhus group</taxon>
    </lineage>
</organism>
<reference key="1">
    <citation type="journal article" date="2004" name="J. Bacteriol.">
        <title>Complete genome sequence of Rickettsia typhi and comparison with sequences of other Rickettsiae.</title>
        <authorList>
            <person name="McLeod M.P."/>
            <person name="Qin X."/>
            <person name="Karpathy S.E."/>
            <person name="Gioia J."/>
            <person name="Highlander S.K."/>
            <person name="Fox G.E."/>
            <person name="McNeill T.Z."/>
            <person name="Jiang H."/>
            <person name="Muzny D."/>
            <person name="Jacob L.S."/>
            <person name="Hawes A.C."/>
            <person name="Sodergren E."/>
            <person name="Gill R."/>
            <person name="Hume J."/>
            <person name="Morgan M."/>
            <person name="Fan G."/>
            <person name="Amin A.G."/>
            <person name="Gibbs R.A."/>
            <person name="Hong C."/>
            <person name="Yu X.-J."/>
            <person name="Walker D.H."/>
            <person name="Weinstock G.M."/>
        </authorList>
    </citation>
    <scope>NUCLEOTIDE SEQUENCE [LARGE SCALE GENOMIC DNA]</scope>
    <source>
        <strain>ATCC VR-144 / Wilmington</strain>
    </source>
</reference>
<dbReference type="EC" id="2.6.1.1" evidence="2"/>
<dbReference type="EC" id="2.6.1.79" evidence="2"/>
<dbReference type="EMBL" id="AE017197">
    <property type="protein sequence ID" value="AAU03533.1"/>
    <property type="molecule type" value="Genomic_DNA"/>
</dbReference>
<dbReference type="RefSeq" id="WP_011190520.1">
    <property type="nucleotide sequence ID" value="NC_006142.1"/>
</dbReference>
<dbReference type="SMR" id="Q68XV9"/>
<dbReference type="KEGG" id="rty:RT0046"/>
<dbReference type="eggNOG" id="COG0436">
    <property type="taxonomic scope" value="Bacteria"/>
</dbReference>
<dbReference type="HOGENOM" id="CLU_017584_4_3_5"/>
<dbReference type="OrthoDB" id="9804407at2"/>
<dbReference type="Proteomes" id="UP000000604">
    <property type="component" value="Chromosome"/>
</dbReference>
<dbReference type="GO" id="GO:0005737">
    <property type="term" value="C:cytoplasm"/>
    <property type="evidence" value="ECO:0007669"/>
    <property type="project" value="UniProtKB-SubCell"/>
</dbReference>
<dbReference type="GO" id="GO:0033854">
    <property type="term" value="F:glutamate-prephenate aminotransferase activity"/>
    <property type="evidence" value="ECO:0007669"/>
    <property type="project" value="UniProtKB-EC"/>
</dbReference>
<dbReference type="GO" id="GO:0004069">
    <property type="term" value="F:L-aspartate:2-oxoglutarate aminotransferase activity"/>
    <property type="evidence" value="ECO:0007669"/>
    <property type="project" value="UniProtKB-EC"/>
</dbReference>
<dbReference type="GO" id="GO:0030170">
    <property type="term" value="F:pyridoxal phosphate binding"/>
    <property type="evidence" value="ECO:0007669"/>
    <property type="project" value="InterPro"/>
</dbReference>
<dbReference type="GO" id="GO:0006520">
    <property type="term" value="P:amino acid metabolic process"/>
    <property type="evidence" value="ECO:0007669"/>
    <property type="project" value="InterPro"/>
</dbReference>
<dbReference type="GO" id="GO:0009058">
    <property type="term" value="P:biosynthetic process"/>
    <property type="evidence" value="ECO:0007669"/>
    <property type="project" value="InterPro"/>
</dbReference>
<dbReference type="CDD" id="cd00609">
    <property type="entry name" value="AAT_like"/>
    <property type="match status" value="1"/>
</dbReference>
<dbReference type="FunFam" id="3.40.640.10:FF:000033">
    <property type="entry name" value="Aspartate aminotransferase"/>
    <property type="match status" value="1"/>
</dbReference>
<dbReference type="Gene3D" id="3.90.1150.10">
    <property type="entry name" value="Aspartate Aminotransferase, domain 1"/>
    <property type="match status" value="1"/>
</dbReference>
<dbReference type="Gene3D" id="3.40.640.10">
    <property type="entry name" value="Type I PLP-dependent aspartate aminotransferase-like (Major domain)"/>
    <property type="match status" value="1"/>
</dbReference>
<dbReference type="InterPro" id="IPR004839">
    <property type="entry name" value="Aminotransferase_I/II_large"/>
</dbReference>
<dbReference type="InterPro" id="IPR050596">
    <property type="entry name" value="AspAT/PAT-like"/>
</dbReference>
<dbReference type="InterPro" id="IPR004838">
    <property type="entry name" value="NHTrfase_class1_PyrdxlP-BS"/>
</dbReference>
<dbReference type="InterPro" id="IPR015424">
    <property type="entry name" value="PyrdxlP-dep_Trfase"/>
</dbReference>
<dbReference type="InterPro" id="IPR015421">
    <property type="entry name" value="PyrdxlP-dep_Trfase_major"/>
</dbReference>
<dbReference type="InterPro" id="IPR015422">
    <property type="entry name" value="PyrdxlP-dep_Trfase_small"/>
</dbReference>
<dbReference type="PANTHER" id="PTHR46383">
    <property type="entry name" value="ASPARTATE AMINOTRANSFERASE"/>
    <property type="match status" value="1"/>
</dbReference>
<dbReference type="PANTHER" id="PTHR46383:SF1">
    <property type="entry name" value="ASPARTATE AMINOTRANSFERASE"/>
    <property type="match status" value="1"/>
</dbReference>
<dbReference type="Pfam" id="PF00155">
    <property type="entry name" value="Aminotran_1_2"/>
    <property type="match status" value="1"/>
</dbReference>
<dbReference type="PRINTS" id="PR00753">
    <property type="entry name" value="ACCSYNTHASE"/>
</dbReference>
<dbReference type="SUPFAM" id="SSF53383">
    <property type="entry name" value="PLP-dependent transferases"/>
    <property type="match status" value="1"/>
</dbReference>
<dbReference type="PROSITE" id="PS00105">
    <property type="entry name" value="AA_TRANSFER_CLASS_1"/>
    <property type="match status" value="1"/>
</dbReference>
<name>AAPAT_RICTY</name>
<gene>
    <name type="primary">aatA</name>
    <name type="ordered locus">RT0046</name>
</gene>
<protein>
    <recommendedName>
        <fullName evidence="2">Probable aspartate/prephenate aminotransferase</fullName>
        <shortName evidence="2">AspAT / PAT</shortName>
        <ecNumber evidence="2">2.6.1.1</ecNumber>
        <ecNumber evidence="2">2.6.1.79</ecNumber>
    </recommendedName>
    <alternativeName>
        <fullName>Transaminase A</fullName>
    </alternativeName>
</protein>
<accession>Q68XV9</accession>
<proteinExistence type="inferred from homology"/>
<sequence>MSIISTRLNSIKPSPTLAVVKKTLELKKAGVNIIALGAGEPDFDTPDNIKEVAITSIKDGFTKYTNVDGIPLLKQAIKNKFKRENNIDYELDEIIVSTGGKQVIYNLFMASLDKGDEVIIPVPYWVSYPDMVALSTGTPIFVNCGIENNFKLTVEALERSITDKTKWLIINSPSNPTGAGYNCKELENIAKTLRKYPNVNIMSDDIYEHITFDDFKFYTLAQIAPDLKERIFTVNGVSKAYSMTGWRIGYGAGSKALIKAMTVIQSQSTSNPCSISQMAAIEALNGTQDYIKPNALNFQKKRDLALSILEKVIYFECYKPEGAFYLFVKCDKIFGTKTKSGKIIANSNHFSEYLLEEAKVAVVPGVAFGLDGYFRISYATSMQELKEACIRIKQACNTL</sequence>
<comment type="function">
    <text evidence="2">Catalyzes the reversible conversion of aspartate and 2-oxoglutarate to glutamate and oxaloacetate. Can also transaminate prephenate in the presence of glutamate.</text>
</comment>
<comment type="catalytic activity">
    <reaction evidence="2">
        <text>L-aspartate + 2-oxoglutarate = oxaloacetate + L-glutamate</text>
        <dbReference type="Rhea" id="RHEA:21824"/>
        <dbReference type="ChEBI" id="CHEBI:16452"/>
        <dbReference type="ChEBI" id="CHEBI:16810"/>
        <dbReference type="ChEBI" id="CHEBI:29985"/>
        <dbReference type="ChEBI" id="CHEBI:29991"/>
        <dbReference type="EC" id="2.6.1.1"/>
    </reaction>
</comment>
<comment type="catalytic activity">
    <reaction evidence="2">
        <text>L-arogenate + 2-oxoglutarate = prephenate + L-glutamate</text>
        <dbReference type="Rhea" id="RHEA:22880"/>
        <dbReference type="ChEBI" id="CHEBI:16810"/>
        <dbReference type="ChEBI" id="CHEBI:29934"/>
        <dbReference type="ChEBI" id="CHEBI:29985"/>
        <dbReference type="ChEBI" id="CHEBI:58180"/>
        <dbReference type="EC" id="2.6.1.79"/>
    </reaction>
</comment>
<comment type="cofactor">
    <cofactor evidence="2">
        <name>pyridoxal 5'-phosphate</name>
        <dbReference type="ChEBI" id="CHEBI:597326"/>
    </cofactor>
</comment>
<comment type="subunit">
    <text evidence="2">Homodimer.</text>
</comment>
<comment type="subcellular location">
    <subcellularLocation>
        <location evidence="2">Cytoplasm</location>
    </subcellularLocation>
</comment>
<comment type="similarity">
    <text evidence="4">Belongs to the class-I pyridoxal-phosphate-dependent aminotransferase family.</text>
</comment>
<keyword id="KW-0032">Aminotransferase</keyword>
<keyword id="KW-0963">Cytoplasm</keyword>
<keyword id="KW-0663">Pyridoxal phosphate</keyword>
<keyword id="KW-0808">Transferase</keyword>